<comment type="function">
    <text evidence="1">Catalyzes the reversible adenylation of nicotinate mononucleotide (NaMN) to nicotinic acid adenine dinucleotide (NaAD).</text>
</comment>
<comment type="catalytic activity">
    <reaction evidence="1">
        <text>nicotinate beta-D-ribonucleotide + ATP + H(+) = deamido-NAD(+) + diphosphate</text>
        <dbReference type="Rhea" id="RHEA:22860"/>
        <dbReference type="ChEBI" id="CHEBI:15378"/>
        <dbReference type="ChEBI" id="CHEBI:30616"/>
        <dbReference type="ChEBI" id="CHEBI:33019"/>
        <dbReference type="ChEBI" id="CHEBI:57502"/>
        <dbReference type="ChEBI" id="CHEBI:58437"/>
        <dbReference type="EC" id="2.7.7.18"/>
    </reaction>
</comment>
<comment type="pathway">
    <text evidence="1">Cofactor biosynthesis; NAD(+) biosynthesis; deamido-NAD(+) from nicotinate D-ribonucleotide: step 1/1.</text>
</comment>
<comment type="similarity">
    <text evidence="1">Belongs to the NadD family.</text>
</comment>
<proteinExistence type="inferred from homology"/>
<gene>
    <name evidence="1" type="primary">nadD</name>
    <name type="ordered locus">Hhal_2141</name>
</gene>
<protein>
    <recommendedName>
        <fullName evidence="1">Probable nicotinate-nucleotide adenylyltransferase</fullName>
        <ecNumber evidence="1">2.7.7.18</ecNumber>
    </recommendedName>
    <alternativeName>
        <fullName evidence="1">Deamido-NAD(+) diphosphorylase</fullName>
    </alternativeName>
    <alternativeName>
        <fullName evidence="1">Deamido-NAD(+) pyrophosphorylase</fullName>
    </alternativeName>
    <alternativeName>
        <fullName evidence="1">Nicotinate mononucleotide adenylyltransferase</fullName>
        <shortName evidence="1">NaMN adenylyltransferase</shortName>
    </alternativeName>
</protein>
<organism>
    <name type="scientific">Halorhodospira halophila (strain DSM 244 / SL1)</name>
    <name type="common">Ectothiorhodospira halophila (strain DSM 244 / SL1)</name>
    <dbReference type="NCBI Taxonomy" id="349124"/>
    <lineage>
        <taxon>Bacteria</taxon>
        <taxon>Pseudomonadati</taxon>
        <taxon>Pseudomonadota</taxon>
        <taxon>Gammaproteobacteria</taxon>
        <taxon>Chromatiales</taxon>
        <taxon>Ectothiorhodospiraceae</taxon>
        <taxon>Halorhodospira</taxon>
    </lineage>
</organism>
<feature type="chain" id="PRO_0000310118" description="Probable nicotinate-nucleotide adenylyltransferase">
    <location>
        <begin position="1"/>
        <end position="218"/>
    </location>
</feature>
<reference key="1">
    <citation type="submission" date="2006-12" db="EMBL/GenBank/DDBJ databases">
        <title>Complete sequence of Halorhodospira halophila SL1.</title>
        <authorList>
            <consortium name="US DOE Joint Genome Institute"/>
            <person name="Copeland A."/>
            <person name="Lucas S."/>
            <person name="Lapidus A."/>
            <person name="Barry K."/>
            <person name="Detter J.C."/>
            <person name="Glavina del Rio T."/>
            <person name="Hammon N."/>
            <person name="Israni S."/>
            <person name="Dalin E."/>
            <person name="Tice H."/>
            <person name="Pitluck S."/>
            <person name="Saunders E."/>
            <person name="Brettin T."/>
            <person name="Bruce D."/>
            <person name="Han C."/>
            <person name="Tapia R."/>
            <person name="Schmutz J."/>
            <person name="Larimer F."/>
            <person name="Land M."/>
            <person name="Hauser L."/>
            <person name="Kyrpides N."/>
            <person name="Mikhailova N."/>
            <person name="Hoff W."/>
            <person name="Richardson P."/>
        </authorList>
    </citation>
    <scope>NUCLEOTIDE SEQUENCE [LARGE SCALE GENOMIC DNA]</scope>
    <source>
        <strain>DSM 244 / SL1</strain>
    </source>
</reference>
<accession>A1WYZ3</accession>
<evidence type="ECO:0000255" key="1">
    <source>
        <dbReference type="HAMAP-Rule" id="MF_00244"/>
    </source>
</evidence>
<sequence length="218" mass="24331">MRQPLRTIGLLGGTFDPIHYGHLRPAEEVREAVQLSELRLIPARIPPHRARPRVGPEQRAELVRRAVADNPSACVDERELHRDGPSYTVDTLAELRAELGGVSLCLILGYDTFLGLPGWSRWRQLFERAHVVVTERPGVRGALPEALATEVARRVAHEPAELRHRPAGCILFQAVTPVDISATGIRRSLALGRSVRYLLPEAVRQRVVEAGWYGYPQL</sequence>
<keyword id="KW-0067">ATP-binding</keyword>
<keyword id="KW-0520">NAD</keyword>
<keyword id="KW-0547">Nucleotide-binding</keyword>
<keyword id="KW-0548">Nucleotidyltransferase</keyword>
<keyword id="KW-0662">Pyridine nucleotide biosynthesis</keyword>
<keyword id="KW-1185">Reference proteome</keyword>
<keyword id="KW-0808">Transferase</keyword>
<dbReference type="EC" id="2.7.7.18" evidence="1"/>
<dbReference type="EMBL" id="CP000544">
    <property type="protein sequence ID" value="ABM62905.1"/>
    <property type="molecule type" value="Genomic_DNA"/>
</dbReference>
<dbReference type="RefSeq" id="WP_011814927.1">
    <property type="nucleotide sequence ID" value="NC_008789.1"/>
</dbReference>
<dbReference type="SMR" id="A1WYZ3"/>
<dbReference type="STRING" id="349124.Hhal_2141"/>
<dbReference type="KEGG" id="hha:Hhal_2141"/>
<dbReference type="eggNOG" id="COG1057">
    <property type="taxonomic scope" value="Bacteria"/>
</dbReference>
<dbReference type="HOGENOM" id="CLU_069765_0_0_6"/>
<dbReference type="OrthoDB" id="5295945at2"/>
<dbReference type="UniPathway" id="UPA00253">
    <property type="reaction ID" value="UER00332"/>
</dbReference>
<dbReference type="Proteomes" id="UP000000647">
    <property type="component" value="Chromosome"/>
</dbReference>
<dbReference type="GO" id="GO:0005524">
    <property type="term" value="F:ATP binding"/>
    <property type="evidence" value="ECO:0007669"/>
    <property type="project" value="UniProtKB-KW"/>
</dbReference>
<dbReference type="GO" id="GO:0004515">
    <property type="term" value="F:nicotinate-nucleotide adenylyltransferase activity"/>
    <property type="evidence" value="ECO:0007669"/>
    <property type="project" value="UniProtKB-UniRule"/>
</dbReference>
<dbReference type="GO" id="GO:0009435">
    <property type="term" value="P:NAD biosynthetic process"/>
    <property type="evidence" value="ECO:0007669"/>
    <property type="project" value="UniProtKB-UniRule"/>
</dbReference>
<dbReference type="CDD" id="cd02165">
    <property type="entry name" value="NMNAT"/>
    <property type="match status" value="1"/>
</dbReference>
<dbReference type="Gene3D" id="3.40.50.620">
    <property type="entry name" value="HUPs"/>
    <property type="match status" value="1"/>
</dbReference>
<dbReference type="HAMAP" id="MF_00244">
    <property type="entry name" value="NaMN_adenylyltr"/>
    <property type="match status" value="1"/>
</dbReference>
<dbReference type="InterPro" id="IPR004821">
    <property type="entry name" value="Cyt_trans-like"/>
</dbReference>
<dbReference type="InterPro" id="IPR005248">
    <property type="entry name" value="NadD/NMNAT"/>
</dbReference>
<dbReference type="InterPro" id="IPR014729">
    <property type="entry name" value="Rossmann-like_a/b/a_fold"/>
</dbReference>
<dbReference type="NCBIfam" id="TIGR00125">
    <property type="entry name" value="cyt_tran_rel"/>
    <property type="match status" value="1"/>
</dbReference>
<dbReference type="NCBIfam" id="TIGR00482">
    <property type="entry name" value="nicotinate (nicotinamide) nucleotide adenylyltransferase"/>
    <property type="match status" value="1"/>
</dbReference>
<dbReference type="NCBIfam" id="NF000839">
    <property type="entry name" value="PRK00071.1-1"/>
    <property type="match status" value="1"/>
</dbReference>
<dbReference type="PANTHER" id="PTHR39321">
    <property type="entry name" value="NICOTINATE-NUCLEOTIDE ADENYLYLTRANSFERASE-RELATED"/>
    <property type="match status" value="1"/>
</dbReference>
<dbReference type="PANTHER" id="PTHR39321:SF3">
    <property type="entry name" value="PHOSPHOPANTETHEINE ADENYLYLTRANSFERASE"/>
    <property type="match status" value="1"/>
</dbReference>
<dbReference type="Pfam" id="PF01467">
    <property type="entry name" value="CTP_transf_like"/>
    <property type="match status" value="1"/>
</dbReference>
<dbReference type="SUPFAM" id="SSF52374">
    <property type="entry name" value="Nucleotidylyl transferase"/>
    <property type="match status" value="1"/>
</dbReference>
<name>NADD_HALHL</name>